<sequence>MILLTFHTRRLVSHAYCGLKPASQKKSIALEMTRPSSNLADFREAFAKAKHIAVITGAGVSAESGVPTFRGAGGYWRKWQAQHLATPEAFARNPSRVWEFYHYRREVMLTKNPNPAHLAIAECETRLRKQGRKLVVITQNIDELHRKAGSRNLFDIHGSLFKTRCTSCGRVKENYKSPICPALDGKGAPESDVQDAKIPVEQLPRCEENGCSGLLRPNVVWFGETLDSNLLGEVEKELETCDLCVVVGTSSVVYPAAMFAPQVAARGVPVAEFNMENTPATTSFTFHFHGPCGTTLPPALARHETELIS</sequence>
<name>SIR5A_XENLA</name>
<evidence type="ECO:0000255" key="1">
    <source>
        <dbReference type="HAMAP-Rule" id="MF_03160"/>
    </source>
</evidence>
<evidence type="ECO:0000255" key="2">
    <source>
        <dbReference type="PROSITE-ProRule" id="PRU00236"/>
    </source>
</evidence>
<gene>
    <name type="primary">sirt5-a</name>
</gene>
<protein>
    <recommendedName>
        <fullName evidence="1">NAD-dependent protein deacylase sirtuin-5A, mitochondrial</fullName>
        <ecNumber evidence="1">2.3.1.-</ecNumber>
    </recommendedName>
    <alternativeName>
        <fullName evidence="1">Regulatory protein SIR2 homolog 5-a</fullName>
    </alternativeName>
</protein>
<organism>
    <name type="scientific">Xenopus laevis</name>
    <name type="common">African clawed frog</name>
    <dbReference type="NCBI Taxonomy" id="8355"/>
    <lineage>
        <taxon>Eukaryota</taxon>
        <taxon>Metazoa</taxon>
        <taxon>Chordata</taxon>
        <taxon>Craniata</taxon>
        <taxon>Vertebrata</taxon>
        <taxon>Euteleostomi</taxon>
        <taxon>Amphibia</taxon>
        <taxon>Batrachia</taxon>
        <taxon>Anura</taxon>
        <taxon>Pipoidea</taxon>
        <taxon>Pipidae</taxon>
        <taxon>Xenopodinae</taxon>
        <taxon>Xenopus</taxon>
        <taxon>Xenopus</taxon>
    </lineage>
</organism>
<reference key="1">
    <citation type="submission" date="2005-01" db="EMBL/GenBank/DDBJ databases">
        <authorList>
            <consortium name="NIH - Xenopus Gene Collection (XGC) project"/>
        </authorList>
    </citation>
    <scope>NUCLEOTIDE SEQUENCE [LARGE SCALE MRNA]</scope>
    <source>
        <tissue>Egg</tissue>
    </source>
</reference>
<proteinExistence type="evidence at transcript level"/>
<comment type="function">
    <text evidence="1">NAD-dependent lysine demalonylase, desuccinylase and deglutarylase that specifically removes malonyl, succinyl and glutaryl groups on target proteins. Has weak NAD-dependent protein deacetylase activity; however this activity may not be physiologically relevant in vivo.</text>
</comment>
<comment type="catalytic activity">
    <reaction evidence="1">
        <text>N(6)-malonyl-L-lysyl-[protein] + NAD(+) + H2O = 2''-O-malonyl-ADP-D-ribose + nicotinamide + L-lysyl-[protein]</text>
        <dbReference type="Rhea" id="RHEA:47672"/>
        <dbReference type="Rhea" id="RHEA-COMP:9752"/>
        <dbReference type="Rhea" id="RHEA-COMP:11878"/>
        <dbReference type="ChEBI" id="CHEBI:15377"/>
        <dbReference type="ChEBI" id="CHEBI:17154"/>
        <dbReference type="ChEBI" id="CHEBI:29969"/>
        <dbReference type="ChEBI" id="CHEBI:57540"/>
        <dbReference type="ChEBI" id="CHEBI:87831"/>
        <dbReference type="ChEBI" id="CHEBI:87833"/>
    </reaction>
</comment>
<comment type="catalytic activity">
    <reaction evidence="1">
        <text>N(6)-succinyl-L-lysyl-[protein] + NAD(+) + H2O = 2''-O-succinyl-ADP-D-ribose + nicotinamide + L-lysyl-[protein]</text>
        <dbReference type="Rhea" id="RHEA:47668"/>
        <dbReference type="Rhea" id="RHEA-COMP:9752"/>
        <dbReference type="Rhea" id="RHEA-COMP:11877"/>
        <dbReference type="ChEBI" id="CHEBI:15377"/>
        <dbReference type="ChEBI" id="CHEBI:17154"/>
        <dbReference type="ChEBI" id="CHEBI:29969"/>
        <dbReference type="ChEBI" id="CHEBI:57540"/>
        <dbReference type="ChEBI" id="CHEBI:87830"/>
        <dbReference type="ChEBI" id="CHEBI:87832"/>
    </reaction>
</comment>
<comment type="catalytic activity">
    <reaction evidence="1">
        <text>N(6)-glutaryl-L-lysyl-[protein] + NAD(+) + H2O = 2''-O-glutaryl-ADP-D-ribose + nicotinamide + L-lysyl-[protein]</text>
        <dbReference type="Rhea" id="RHEA:47664"/>
        <dbReference type="Rhea" id="RHEA-COMP:9752"/>
        <dbReference type="Rhea" id="RHEA-COMP:11875"/>
        <dbReference type="ChEBI" id="CHEBI:15377"/>
        <dbReference type="ChEBI" id="CHEBI:17154"/>
        <dbReference type="ChEBI" id="CHEBI:29969"/>
        <dbReference type="ChEBI" id="CHEBI:57540"/>
        <dbReference type="ChEBI" id="CHEBI:87828"/>
        <dbReference type="ChEBI" id="CHEBI:87829"/>
    </reaction>
</comment>
<comment type="cofactor">
    <cofactor evidence="1">
        <name>Zn(2+)</name>
        <dbReference type="ChEBI" id="CHEBI:29105"/>
    </cofactor>
    <text evidence="1">Binds 1 zinc ion per subunit.</text>
</comment>
<comment type="subcellular location">
    <subcellularLocation>
        <location evidence="1">Mitochondrion</location>
    </subcellularLocation>
    <subcellularLocation>
        <location evidence="1">Cytoplasm</location>
        <location evidence="1">Cytosol</location>
    </subcellularLocation>
    <subcellularLocation>
        <location evidence="1">Nucleus</location>
    </subcellularLocation>
    <text evidence="1">Mainly mitochondrial. Also present extramitochondrially, with a fraction present in the cytosol and very small amounts also detected in the nucleus.</text>
</comment>
<comment type="domain">
    <text evidence="1">In contrast to class I sirtuins, class III sirtuins have only weak deacetylase activity. Difference in substrate specificity is probably due to a larger hydrophobic pocket with 2 residues (Tyr-101 and Arg-104) that bind to malonylated and succinylated substrates and define the specificity.</text>
</comment>
<comment type="similarity">
    <text evidence="1">Belongs to the sirtuin family. Class III subfamily.</text>
</comment>
<feature type="transit peptide" description="Mitochondrion" evidence="1">
    <location>
        <begin position="1"/>
        <end position="35"/>
    </location>
</feature>
<feature type="chain" id="PRO_0000415574" description="NAD-dependent protein deacylase sirtuin-5A, mitochondrial">
    <location>
        <begin position="36"/>
        <end position="309"/>
    </location>
</feature>
<feature type="domain" description="Deacetylase sirtuin-type" evidence="2">
    <location>
        <begin position="36"/>
        <end position="306"/>
    </location>
</feature>
<feature type="active site" description="Proton acceptor" evidence="2">
    <location>
        <position position="157"/>
    </location>
</feature>
<feature type="binding site" evidence="1">
    <location>
        <begin position="57"/>
        <end position="76"/>
    </location>
    <ligand>
        <name>NAD(+)</name>
        <dbReference type="ChEBI" id="CHEBI:57540"/>
    </ligand>
</feature>
<feature type="binding site" evidence="1">
    <location>
        <position position="101"/>
    </location>
    <ligand>
        <name>substrate</name>
    </ligand>
</feature>
<feature type="binding site" evidence="1">
    <location>
        <position position="104"/>
    </location>
    <ligand>
        <name>substrate</name>
    </ligand>
</feature>
<feature type="binding site" evidence="1">
    <location>
        <begin position="139"/>
        <end position="142"/>
    </location>
    <ligand>
        <name>NAD(+)</name>
        <dbReference type="ChEBI" id="CHEBI:57540"/>
    </ligand>
</feature>
<feature type="binding site" evidence="1">
    <location>
        <position position="165"/>
    </location>
    <ligand>
        <name>Zn(2+)</name>
        <dbReference type="ChEBI" id="CHEBI:29105"/>
    </ligand>
</feature>
<feature type="binding site" evidence="1">
    <location>
        <position position="168"/>
    </location>
    <ligand>
        <name>Zn(2+)</name>
        <dbReference type="ChEBI" id="CHEBI:29105"/>
    </ligand>
</feature>
<feature type="binding site" evidence="1">
    <location>
        <position position="206"/>
    </location>
    <ligand>
        <name>Zn(2+)</name>
        <dbReference type="ChEBI" id="CHEBI:29105"/>
    </ligand>
</feature>
<feature type="binding site" evidence="1">
    <location>
        <position position="211"/>
    </location>
    <ligand>
        <name>Zn(2+)</name>
        <dbReference type="ChEBI" id="CHEBI:29105"/>
    </ligand>
</feature>
<feature type="binding site" evidence="1">
    <location>
        <begin position="248"/>
        <end position="250"/>
    </location>
    <ligand>
        <name>NAD(+)</name>
        <dbReference type="ChEBI" id="CHEBI:57540"/>
    </ligand>
</feature>
<feature type="binding site" evidence="1">
    <location>
        <begin position="274"/>
        <end position="276"/>
    </location>
    <ligand>
        <name>NAD(+)</name>
        <dbReference type="ChEBI" id="CHEBI:57540"/>
    </ligand>
</feature>
<feature type="binding site" evidence="1">
    <location>
        <position position="292"/>
    </location>
    <ligand>
        <name>NAD(+)</name>
        <dbReference type="ChEBI" id="CHEBI:57540"/>
    </ligand>
</feature>
<dbReference type="EC" id="2.3.1.-" evidence="1"/>
<dbReference type="EMBL" id="BC088944">
    <property type="protein sequence ID" value="AAH88944.1"/>
    <property type="molecule type" value="mRNA"/>
</dbReference>
<dbReference type="RefSeq" id="NP_001088966.1">
    <property type="nucleotide sequence ID" value="NM_001095497.1"/>
</dbReference>
<dbReference type="SMR" id="Q5HZN8"/>
<dbReference type="DNASU" id="496346"/>
<dbReference type="GeneID" id="496346"/>
<dbReference type="KEGG" id="xla:496346"/>
<dbReference type="AGR" id="Xenbase:XB-GENE-5892455"/>
<dbReference type="CTD" id="496346"/>
<dbReference type="Xenbase" id="XB-GENE-5892455">
    <property type="gene designation" value="sirt5.L"/>
</dbReference>
<dbReference type="OMA" id="LIHMHGE"/>
<dbReference type="OrthoDB" id="424302at2759"/>
<dbReference type="Proteomes" id="UP000186698">
    <property type="component" value="Chromosome 6L"/>
</dbReference>
<dbReference type="Bgee" id="496346">
    <property type="expression patterns" value="Expressed in muscle tissue and 19 other cell types or tissues"/>
</dbReference>
<dbReference type="GO" id="GO:0005829">
    <property type="term" value="C:cytosol"/>
    <property type="evidence" value="ECO:0000250"/>
    <property type="project" value="UniProtKB"/>
</dbReference>
<dbReference type="GO" id="GO:0005759">
    <property type="term" value="C:mitochondrial matrix"/>
    <property type="evidence" value="ECO:0000318"/>
    <property type="project" value="GO_Central"/>
</dbReference>
<dbReference type="GO" id="GO:0005739">
    <property type="term" value="C:mitochondrion"/>
    <property type="evidence" value="ECO:0000250"/>
    <property type="project" value="UniProtKB"/>
</dbReference>
<dbReference type="GO" id="GO:0005634">
    <property type="term" value="C:nucleus"/>
    <property type="evidence" value="ECO:0000318"/>
    <property type="project" value="GO_Central"/>
</dbReference>
<dbReference type="GO" id="GO:0017136">
    <property type="term" value="F:histone deacetylase activity, NAD-dependent"/>
    <property type="evidence" value="ECO:0000318"/>
    <property type="project" value="GO_Central"/>
</dbReference>
<dbReference type="GO" id="GO:0070403">
    <property type="term" value="F:NAD+ binding"/>
    <property type="evidence" value="ECO:0000250"/>
    <property type="project" value="UniProtKB"/>
</dbReference>
<dbReference type="GO" id="GO:0061697">
    <property type="term" value="F:protein-glutaryllysine deglutarylase activity"/>
    <property type="evidence" value="ECO:0000318"/>
    <property type="project" value="GO_Central"/>
</dbReference>
<dbReference type="GO" id="GO:0036054">
    <property type="term" value="F:protein-malonyllysine demalonylase activity"/>
    <property type="evidence" value="ECO:0000250"/>
    <property type="project" value="UniProtKB"/>
</dbReference>
<dbReference type="GO" id="GO:0036055">
    <property type="term" value="F:protein-succinyllysine desuccinylase activity"/>
    <property type="evidence" value="ECO:0000250"/>
    <property type="project" value="UniProtKB"/>
</dbReference>
<dbReference type="GO" id="GO:0008270">
    <property type="term" value="F:zinc ion binding"/>
    <property type="evidence" value="ECO:0000250"/>
    <property type="project" value="UniProtKB"/>
</dbReference>
<dbReference type="GO" id="GO:0036047">
    <property type="term" value="P:peptidyl-lysine demalonylation"/>
    <property type="evidence" value="ECO:0000250"/>
    <property type="project" value="UniProtKB"/>
</dbReference>
<dbReference type="GO" id="GO:0036049">
    <property type="term" value="P:peptidyl-lysine desuccinylation"/>
    <property type="evidence" value="ECO:0000250"/>
    <property type="project" value="UniProtKB"/>
</dbReference>
<dbReference type="GO" id="GO:0036048">
    <property type="term" value="P:protein desuccinylation"/>
    <property type="evidence" value="ECO:0000250"/>
    <property type="project" value="UniProtKB"/>
</dbReference>
<dbReference type="CDD" id="cd01412">
    <property type="entry name" value="SIRT5_Af1_CobB"/>
    <property type="match status" value="1"/>
</dbReference>
<dbReference type="FunFam" id="3.30.1600.10:FF:000005">
    <property type="entry name" value="NAD-dependent protein deacylase sirtuin-5, mitochondrial"/>
    <property type="match status" value="1"/>
</dbReference>
<dbReference type="Gene3D" id="3.30.1600.10">
    <property type="entry name" value="SIR2/SIRT2 'Small Domain"/>
    <property type="match status" value="1"/>
</dbReference>
<dbReference type="Gene3D" id="3.40.50.1220">
    <property type="entry name" value="TPP-binding domain"/>
    <property type="match status" value="1"/>
</dbReference>
<dbReference type="HAMAP" id="MF_01121">
    <property type="entry name" value="Sirtuin_ClassIII"/>
    <property type="match status" value="1"/>
</dbReference>
<dbReference type="InterPro" id="IPR029035">
    <property type="entry name" value="DHS-like_NAD/FAD-binding_dom"/>
</dbReference>
<dbReference type="InterPro" id="IPR050134">
    <property type="entry name" value="NAD-dep_sirtuin_deacylases"/>
</dbReference>
<dbReference type="InterPro" id="IPR003000">
    <property type="entry name" value="Sirtuin"/>
</dbReference>
<dbReference type="InterPro" id="IPR026591">
    <property type="entry name" value="Sirtuin_cat_small_dom_sf"/>
</dbReference>
<dbReference type="InterPro" id="IPR027546">
    <property type="entry name" value="Sirtuin_class_III"/>
</dbReference>
<dbReference type="InterPro" id="IPR026590">
    <property type="entry name" value="Ssirtuin_cat_dom"/>
</dbReference>
<dbReference type="NCBIfam" id="NF001753">
    <property type="entry name" value="PRK00481.1-3"/>
    <property type="match status" value="1"/>
</dbReference>
<dbReference type="PANTHER" id="PTHR11085">
    <property type="entry name" value="NAD-DEPENDENT PROTEIN DEACYLASE SIRTUIN-5, MITOCHONDRIAL-RELATED"/>
    <property type="match status" value="1"/>
</dbReference>
<dbReference type="PANTHER" id="PTHR11085:SF10">
    <property type="entry name" value="NAD-DEPENDENT PROTEIN DEACYLASE SIRTUIN-5, MITOCHONDRIAL-RELATED"/>
    <property type="match status" value="1"/>
</dbReference>
<dbReference type="Pfam" id="PF02146">
    <property type="entry name" value="SIR2"/>
    <property type="match status" value="1"/>
</dbReference>
<dbReference type="SUPFAM" id="SSF52467">
    <property type="entry name" value="DHS-like NAD/FAD-binding domain"/>
    <property type="match status" value="1"/>
</dbReference>
<dbReference type="PROSITE" id="PS50305">
    <property type="entry name" value="SIRTUIN"/>
    <property type="match status" value="1"/>
</dbReference>
<accession>Q5HZN8</accession>
<keyword id="KW-0963">Cytoplasm</keyword>
<keyword id="KW-0479">Metal-binding</keyword>
<keyword id="KW-0496">Mitochondrion</keyword>
<keyword id="KW-0520">NAD</keyword>
<keyword id="KW-0539">Nucleus</keyword>
<keyword id="KW-1185">Reference proteome</keyword>
<keyword id="KW-0808">Transferase</keyword>
<keyword id="KW-0809">Transit peptide</keyword>
<keyword id="KW-0862">Zinc</keyword>